<accession>Q49Y80</accession>
<feature type="chain" id="PRO_0000224911" description="Holliday junction branch migration complex subunit RuvA">
    <location>
        <begin position="1"/>
        <end position="200"/>
    </location>
</feature>
<feature type="region of interest" description="Domain I" evidence="1">
    <location>
        <begin position="1"/>
        <end position="63"/>
    </location>
</feature>
<feature type="region of interest" description="Domain II" evidence="1">
    <location>
        <begin position="64"/>
        <end position="142"/>
    </location>
</feature>
<feature type="region of interest" description="Flexible linker" evidence="1">
    <location>
        <begin position="143"/>
        <end position="149"/>
    </location>
</feature>
<feature type="region of interest" description="Domain III" evidence="1">
    <location>
        <begin position="150"/>
        <end position="200"/>
    </location>
</feature>
<protein>
    <recommendedName>
        <fullName evidence="1">Holliday junction branch migration complex subunit RuvA</fullName>
    </recommendedName>
</protein>
<sequence length="200" mass="22111">MYAYIKGTLTELNPTHVVVEASGVGYEIQTPNSYRFQKYMDHEVVVHTSLIVREDAQLLYGFINQEEKDMFLSLIKVTGIGPKSALAILASSSPNDVKIAIENENDAYLTKFPGIGKKTARQIVLDLKGKVQINDVDSSQILNTDTQDHANAPIIKEALLALEALGYSKRELTKVEKSLSKETFDSVDDAVKRGLQLLIA</sequence>
<dbReference type="EMBL" id="AP008934">
    <property type="protein sequence ID" value="BAE18262.1"/>
    <property type="molecule type" value="Genomic_DNA"/>
</dbReference>
<dbReference type="RefSeq" id="WP_011302948.1">
    <property type="nucleotide sequence ID" value="NZ_MTGA01000038.1"/>
</dbReference>
<dbReference type="SMR" id="Q49Y80"/>
<dbReference type="GeneID" id="3614959"/>
<dbReference type="KEGG" id="ssp:SSP1117"/>
<dbReference type="PATRIC" id="fig|342451.11.peg.1116"/>
<dbReference type="eggNOG" id="COG0632">
    <property type="taxonomic scope" value="Bacteria"/>
</dbReference>
<dbReference type="HOGENOM" id="CLU_087936_1_0_9"/>
<dbReference type="OrthoDB" id="5293449at2"/>
<dbReference type="Proteomes" id="UP000006371">
    <property type="component" value="Chromosome"/>
</dbReference>
<dbReference type="GO" id="GO:0005737">
    <property type="term" value="C:cytoplasm"/>
    <property type="evidence" value="ECO:0007669"/>
    <property type="project" value="UniProtKB-SubCell"/>
</dbReference>
<dbReference type="GO" id="GO:0009379">
    <property type="term" value="C:Holliday junction helicase complex"/>
    <property type="evidence" value="ECO:0007669"/>
    <property type="project" value="InterPro"/>
</dbReference>
<dbReference type="GO" id="GO:0048476">
    <property type="term" value="C:Holliday junction resolvase complex"/>
    <property type="evidence" value="ECO:0007669"/>
    <property type="project" value="UniProtKB-UniRule"/>
</dbReference>
<dbReference type="GO" id="GO:0005524">
    <property type="term" value="F:ATP binding"/>
    <property type="evidence" value="ECO:0007669"/>
    <property type="project" value="InterPro"/>
</dbReference>
<dbReference type="GO" id="GO:0000400">
    <property type="term" value="F:four-way junction DNA binding"/>
    <property type="evidence" value="ECO:0007669"/>
    <property type="project" value="UniProtKB-UniRule"/>
</dbReference>
<dbReference type="GO" id="GO:0009378">
    <property type="term" value="F:four-way junction helicase activity"/>
    <property type="evidence" value="ECO:0007669"/>
    <property type="project" value="InterPro"/>
</dbReference>
<dbReference type="GO" id="GO:0006310">
    <property type="term" value="P:DNA recombination"/>
    <property type="evidence" value="ECO:0007669"/>
    <property type="project" value="UniProtKB-UniRule"/>
</dbReference>
<dbReference type="GO" id="GO:0006281">
    <property type="term" value="P:DNA repair"/>
    <property type="evidence" value="ECO:0007669"/>
    <property type="project" value="UniProtKB-UniRule"/>
</dbReference>
<dbReference type="CDD" id="cd14332">
    <property type="entry name" value="UBA_RuvA_C"/>
    <property type="match status" value="1"/>
</dbReference>
<dbReference type="Gene3D" id="1.10.150.20">
    <property type="entry name" value="5' to 3' exonuclease, C-terminal subdomain"/>
    <property type="match status" value="1"/>
</dbReference>
<dbReference type="Gene3D" id="2.40.50.140">
    <property type="entry name" value="Nucleic acid-binding proteins"/>
    <property type="match status" value="1"/>
</dbReference>
<dbReference type="HAMAP" id="MF_00031">
    <property type="entry name" value="DNA_HJ_migration_RuvA"/>
    <property type="match status" value="1"/>
</dbReference>
<dbReference type="InterPro" id="IPR013849">
    <property type="entry name" value="DNA_helicase_Holl-junc_RuvA_I"/>
</dbReference>
<dbReference type="InterPro" id="IPR003583">
    <property type="entry name" value="Hlx-hairpin-Hlx_DNA-bd_motif"/>
</dbReference>
<dbReference type="InterPro" id="IPR012340">
    <property type="entry name" value="NA-bd_OB-fold"/>
</dbReference>
<dbReference type="InterPro" id="IPR000085">
    <property type="entry name" value="RuvA"/>
</dbReference>
<dbReference type="InterPro" id="IPR010994">
    <property type="entry name" value="RuvA_2-like"/>
</dbReference>
<dbReference type="InterPro" id="IPR011114">
    <property type="entry name" value="RuvA_C"/>
</dbReference>
<dbReference type="InterPro" id="IPR036267">
    <property type="entry name" value="RuvA_C_sf"/>
</dbReference>
<dbReference type="NCBIfam" id="TIGR00084">
    <property type="entry name" value="ruvA"/>
    <property type="match status" value="1"/>
</dbReference>
<dbReference type="Pfam" id="PF14520">
    <property type="entry name" value="HHH_5"/>
    <property type="match status" value="1"/>
</dbReference>
<dbReference type="Pfam" id="PF07499">
    <property type="entry name" value="RuvA_C"/>
    <property type="match status" value="1"/>
</dbReference>
<dbReference type="Pfam" id="PF01330">
    <property type="entry name" value="RuvA_N"/>
    <property type="match status" value="1"/>
</dbReference>
<dbReference type="SMART" id="SM00278">
    <property type="entry name" value="HhH1"/>
    <property type="match status" value="2"/>
</dbReference>
<dbReference type="SUPFAM" id="SSF46929">
    <property type="entry name" value="DNA helicase RuvA subunit, C-terminal domain"/>
    <property type="match status" value="1"/>
</dbReference>
<dbReference type="SUPFAM" id="SSF50249">
    <property type="entry name" value="Nucleic acid-binding proteins"/>
    <property type="match status" value="1"/>
</dbReference>
<dbReference type="SUPFAM" id="SSF47781">
    <property type="entry name" value="RuvA domain 2-like"/>
    <property type="match status" value="1"/>
</dbReference>
<reference key="1">
    <citation type="journal article" date="2005" name="Proc. Natl. Acad. Sci. U.S.A.">
        <title>Whole genome sequence of Staphylococcus saprophyticus reveals the pathogenesis of uncomplicated urinary tract infection.</title>
        <authorList>
            <person name="Kuroda M."/>
            <person name="Yamashita A."/>
            <person name="Hirakawa H."/>
            <person name="Kumano M."/>
            <person name="Morikawa K."/>
            <person name="Higashide M."/>
            <person name="Maruyama A."/>
            <person name="Inose Y."/>
            <person name="Matoba K."/>
            <person name="Toh H."/>
            <person name="Kuhara S."/>
            <person name="Hattori M."/>
            <person name="Ohta T."/>
        </authorList>
    </citation>
    <scope>NUCLEOTIDE SEQUENCE [LARGE SCALE GENOMIC DNA]</scope>
    <source>
        <strain>ATCC 15305 / DSM 20229 / NCIMB 8711 / NCTC 7292 / S-41</strain>
    </source>
</reference>
<keyword id="KW-0963">Cytoplasm</keyword>
<keyword id="KW-0227">DNA damage</keyword>
<keyword id="KW-0233">DNA recombination</keyword>
<keyword id="KW-0234">DNA repair</keyword>
<keyword id="KW-0238">DNA-binding</keyword>
<keyword id="KW-1185">Reference proteome</keyword>
<gene>
    <name evidence="1" type="primary">ruvA</name>
    <name type="ordered locus">SSP1117</name>
</gene>
<comment type="function">
    <text evidence="1">The RuvA-RuvB-RuvC complex processes Holliday junction (HJ) DNA during genetic recombination and DNA repair, while the RuvA-RuvB complex plays an important role in the rescue of blocked DNA replication forks via replication fork reversal (RFR). RuvA specifically binds to HJ cruciform DNA, conferring on it an open structure. The RuvB hexamer acts as an ATP-dependent pump, pulling dsDNA into and through the RuvAB complex. HJ branch migration allows RuvC to scan DNA until it finds its consensus sequence, where it cleaves and resolves the cruciform DNA.</text>
</comment>
<comment type="subunit">
    <text evidence="1">Homotetramer. Forms an RuvA(8)-RuvB(12)-Holliday junction (HJ) complex. HJ DNA is sandwiched between 2 RuvA tetramers; dsDNA enters through RuvA and exits via RuvB. An RuvB hexamer assembles on each DNA strand where it exits the tetramer. Each RuvB hexamer is contacted by two RuvA subunits (via domain III) on 2 adjacent RuvB subunits; this complex drives branch migration. In the full resolvosome a probable DNA-RuvA(4)-RuvB(12)-RuvC(2) complex forms which resolves the HJ.</text>
</comment>
<comment type="subcellular location">
    <subcellularLocation>
        <location evidence="1">Cytoplasm</location>
    </subcellularLocation>
</comment>
<comment type="domain">
    <text evidence="1">Has three domains with a flexible linker between the domains II and III and assumes an 'L' shape. Domain III is highly mobile and contacts RuvB.</text>
</comment>
<comment type="similarity">
    <text evidence="1">Belongs to the RuvA family.</text>
</comment>
<proteinExistence type="inferred from homology"/>
<name>RUVA_STAS1</name>
<evidence type="ECO:0000255" key="1">
    <source>
        <dbReference type="HAMAP-Rule" id="MF_00031"/>
    </source>
</evidence>
<organism>
    <name type="scientific">Staphylococcus saprophyticus subsp. saprophyticus (strain ATCC 15305 / DSM 20229 / NCIMB 8711 / NCTC 7292 / S-41)</name>
    <dbReference type="NCBI Taxonomy" id="342451"/>
    <lineage>
        <taxon>Bacteria</taxon>
        <taxon>Bacillati</taxon>
        <taxon>Bacillota</taxon>
        <taxon>Bacilli</taxon>
        <taxon>Bacillales</taxon>
        <taxon>Staphylococcaceae</taxon>
        <taxon>Staphylococcus</taxon>
    </lineage>
</organism>